<reference key="1">
    <citation type="journal article" date="2008" name="PLoS ONE">
        <title>Genome biology of Actinobacillus pleuropneumoniae JL03, an isolate of serotype 3 prevalent in China.</title>
        <authorList>
            <person name="Xu Z."/>
            <person name="Zhou Y."/>
            <person name="Li L."/>
            <person name="Zhou R."/>
            <person name="Xiao S."/>
            <person name="Wan Y."/>
            <person name="Zhang S."/>
            <person name="Wang K."/>
            <person name="Li W."/>
            <person name="Li L."/>
            <person name="Jin H."/>
            <person name="Kang M."/>
            <person name="Dalai B."/>
            <person name="Li T."/>
            <person name="Liu L."/>
            <person name="Cheng Y."/>
            <person name="Zhang L."/>
            <person name="Xu T."/>
            <person name="Zheng H."/>
            <person name="Pu S."/>
            <person name="Wang B."/>
            <person name="Gu W."/>
            <person name="Zhang X.L."/>
            <person name="Zhu G.-F."/>
            <person name="Wang S."/>
            <person name="Zhao G.-P."/>
            <person name="Chen H."/>
        </authorList>
    </citation>
    <scope>NUCLEOTIDE SEQUENCE [LARGE SCALE GENOMIC DNA]</scope>
    <source>
        <strain>JL03</strain>
    </source>
</reference>
<comment type="function">
    <text evidence="1">Involved in iron-sulfur (Fe-S) cluster assembly. May act as a regulator of Fe-S biogenesis.</text>
</comment>
<comment type="similarity">
    <text evidence="1">Belongs to the frataxin family.</text>
</comment>
<feature type="chain" id="PRO_1000096232" description="Iron-sulfur cluster assembly protein CyaY">
    <location>
        <begin position="1"/>
        <end position="101"/>
    </location>
</feature>
<protein>
    <recommendedName>
        <fullName evidence="1">Iron-sulfur cluster assembly protein CyaY</fullName>
    </recommendedName>
</protein>
<gene>
    <name evidence="1" type="primary">cyaY</name>
    <name type="ordered locus">APJL_1136</name>
</gene>
<accession>B0BQ57</accession>
<keyword id="KW-0408">Iron</keyword>
<keyword id="KW-0479">Metal-binding</keyword>
<sequence>MNVAEFHQKVEQVWQQIEEKIDDEALSIDTEIHGAVCTLTFDDESQIIINKQEAMLELWLASKLGGFHFAFRDGEWVTAEGRSFWTHLEEAFARHGEQISF</sequence>
<name>CYAY_ACTPJ</name>
<proteinExistence type="inferred from homology"/>
<organism>
    <name type="scientific">Actinobacillus pleuropneumoniae serotype 3 (strain JL03)</name>
    <dbReference type="NCBI Taxonomy" id="434271"/>
    <lineage>
        <taxon>Bacteria</taxon>
        <taxon>Pseudomonadati</taxon>
        <taxon>Pseudomonadota</taxon>
        <taxon>Gammaproteobacteria</taxon>
        <taxon>Pasteurellales</taxon>
        <taxon>Pasteurellaceae</taxon>
        <taxon>Actinobacillus</taxon>
    </lineage>
</organism>
<evidence type="ECO:0000255" key="1">
    <source>
        <dbReference type="HAMAP-Rule" id="MF_00142"/>
    </source>
</evidence>
<dbReference type="EMBL" id="CP000687">
    <property type="protein sequence ID" value="ABY69692.1"/>
    <property type="molecule type" value="Genomic_DNA"/>
</dbReference>
<dbReference type="RefSeq" id="WP_005604853.1">
    <property type="nucleotide sequence ID" value="NC_010278.1"/>
</dbReference>
<dbReference type="SMR" id="B0BQ57"/>
<dbReference type="KEGG" id="apj:APJL_1136"/>
<dbReference type="HOGENOM" id="CLU_080880_3_0_6"/>
<dbReference type="Proteomes" id="UP000008547">
    <property type="component" value="Chromosome"/>
</dbReference>
<dbReference type="GO" id="GO:0005737">
    <property type="term" value="C:cytoplasm"/>
    <property type="evidence" value="ECO:0007669"/>
    <property type="project" value="UniProtKB-ARBA"/>
</dbReference>
<dbReference type="GO" id="GO:0008199">
    <property type="term" value="F:ferric iron binding"/>
    <property type="evidence" value="ECO:0007669"/>
    <property type="project" value="InterPro"/>
</dbReference>
<dbReference type="GO" id="GO:0016226">
    <property type="term" value="P:iron-sulfur cluster assembly"/>
    <property type="evidence" value="ECO:0007669"/>
    <property type="project" value="UniProtKB-UniRule"/>
</dbReference>
<dbReference type="Gene3D" id="3.30.920.10">
    <property type="entry name" value="Frataxin/CyaY"/>
    <property type="match status" value="1"/>
</dbReference>
<dbReference type="HAMAP" id="MF_00142">
    <property type="entry name" value="CyaY"/>
    <property type="match status" value="1"/>
</dbReference>
<dbReference type="InterPro" id="IPR047584">
    <property type="entry name" value="CyaY"/>
</dbReference>
<dbReference type="InterPro" id="IPR002908">
    <property type="entry name" value="Frataxin/CyaY"/>
</dbReference>
<dbReference type="InterPro" id="IPR036524">
    <property type="entry name" value="Frataxin/CyaY_sf"/>
</dbReference>
<dbReference type="InterPro" id="IPR020895">
    <property type="entry name" value="Frataxin_CS"/>
</dbReference>
<dbReference type="NCBIfam" id="TIGR03421">
    <property type="entry name" value="FeS_CyaY"/>
    <property type="match status" value="1"/>
</dbReference>
<dbReference type="Pfam" id="PF01491">
    <property type="entry name" value="Frataxin_Cyay"/>
    <property type="match status" value="1"/>
</dbReference>
<dbReference type="SMART" id="SM01219">
    <property type="entry name" value="Frataxin_Cyay"/>
    <property type="match status" value="1"/>
</dbReference>
<dbReference type="SUPFAM" id="SSF55387">
    <property type="entry name" value="Frataxin/Nqo15-like"/>
    <property type="match status" value="1"/>
</dbReference>
<dbReference type="PROSITE" id="PS01344">
    <property type="entry name" value="FRATAXIN_1"/>
    <property type="match status" value="1"/>
</dbReference>
<dbReference type="PROSITE" id="PS50810">
    <property type="entry name" value="FRATAXIN_2"/>
    <property type="match status" value="1"/>
</dbReference>